<name>IBMP_SOCMV</name>
<organism>
    <name type="scientific">Soybean chlorotic mottle virus</name>
    <dbReference type="NCBI Taxonomy" id="10651"/>
    <lineage>
        <taxon>Viruses</taxon>
        <taxon>Riboviria</taxon>
        <taxon>Pararnavirae</taxon>
        <taxon>Artverviricota</taxon>
        <taxon>Revtraviricetes</taxon>
        <taxon>Ortervirales</taxon>
        <taxon>Caulimoviridae</taxon>
        <taxon>Soymovirus</taxon>
        <taxon>Soymovirus maculaglycinis</taxon>
    </lineage>
</organism>
<feature type="chain" id="PRO_0000222049" description="Transactivator/viroplasmin protein">
    <location>
        <begin position="1"/>
        <end position="462"/>
    </location>
</feature>
<feature type="region of interest" description="Disordered" evidence="1">
    <location>
        <begin position="433"/>
        <end position="462"/>
    </location>
</feature>
<feature type="compositionally biased region" description="Polar residues" evidence="1">
    <location>
        <begin position="443"/>
        <end position="462"/>
    </location>
</feature>
<keyword id="KW-1035">Host cytoplasm</keyword>
<keyword id="KW-1185">Reference proteome</keyword>
<keyword id="KW-0810">Translation regulation</keyword>
<gene>
    <name type="ORF">ORF VI</name>
</gene>
<evidence type="ECO:0000256" key="1">
    <source>
        <dbReference type="SAM" id="MobiDB-lite"/>
    </source>
</evidence>
<evidence type="ECO:0000305" key="2"/>
<sequence length="462" mass="53140">MEQAIKQLRNQQKQLDQQIEQQKQTLNSLISRREEVTKGIQTLELLSGTTLVPDQQIHEALQPAVSESTKGNQEIKTWKQIFDEEHELTREEKIDATVGQKKKAYVIFDGPWKGIYQDWHIVKSKVNAQPYRYKGYNSLEEAKLAHKQAYAEVTKADEVKVEKTMKSFAKNNVAEKIHGLHKSGPKELTEAEFYRNWKMITEWTEESANLGFYPDCSKQVKAVFFIGADPHLLSSFYQSGLISYIYLQEDEGQKGAISKATSQLPKELRRTCQQYQLSFAKTREFYLAIQSTYPVFDEEKMLVPAKHLVKLGISASSYPENKIVKTNFNFSLFINSVDKLYNYIRQYGTTIKGFKVLMKTQLCLAVCLIRDQAEESSKIMVMEFELDISTLTGIFSNLPKELKKATCEKMHRYKSHLCESCEINFPELSETMNVSNDEKRSTKSVSSDEINLSAENDGYQHS</sequence>
<organismHost>
    <name type="scientific">Glycine max</name>
    <name type="common">Soybean</name>
    <name type="synonym">Glycine hispida</name>
    <dbReference type="NCBI Taxonomy" id="3847"/>
</organismHost>
<organismHost>
    <name type="scientific">Lablab purpureus</name>
    <name type="common">Hyacinth bean</name>
    <name type="synonym">Dolichos lablab</name>
    <dbReference type="NCBI Taxonomy" id="35936"/>
</organismHost>
<organismHost>
    <name type="scientific">Phaseolus vulgaris</name>
    <name type="common">Kidney bean</name>
    <name type="synonym">French bean</name>
    <dbReference type="NCBI Taxonomy" id="3885"/>
</organismHost>
<organismHost>
    <name type="scientific">Vigna unguiculata</name>
    <name type="common">Cowpea</name>
    <dbReference type="NCBI Taxonomy" id="3917"/>
</organismHost>
<comment type="function">
    <text>Enhances the translation of downstream ORFs on polycistronic mRNAs derived from soybean chlorotic mottle virus.</text>
</comment>
<comment type="subcellular location">
    <subcellularLocation>
        <location>Host cytoplasm</location>
    </subcellularLocation>
    <text>Found in cytoplasmic occlusion bodies.</text>
</comment>
<comment type="miscellaneous">
    <text>The inclusion bodies are the site of viral DNA synthesis, virion assembly and accumulation in the infected cell.</text>
</comment>
<comment type="similarity">
    <text evidence="2">Belongs to the caulimoviridae viroplasmin family.</text>
</comment>
<reference key="1">
    <citation type="journal article" date="1989" name="Nucleic Acids Res.">
        <title>The complete sequence of soybean chlorotic mottle virus DNA and the identification of a novel promoter.</title>
        <authorList>
            <person name="Hasegawa A."/>
            <person name="Verver J."/>
            <person name="Shimada A."/>
            <person name="Saito M."/>
            <person name="Goldbach R."/>
            <person name="van Kammen A."/>
            <person name="Miki K."/>
            <person name="Kameya-Iwaki M."/>
            <person name="Hibi T."/>
        </authorList>
    </citation>
    <scope>NUCLEOTIDE SEQUENCE [GENOMIC DNA]</scope>
</reference>
<reference key="2">
    <citation type="submission" date="2000-11" db="EMBL/GenBank/DDBJ databases">
        <authorList>
            <person name="Hibi T."/>
        </authorList>
    </citation>
    <scope>SEQUENCE REVISION</scope>
</reference>
<protein>
    <recommendedName>
        <fullName>Transactivator/viroplasmin protein</fullName>
        <shortName>Tav</shortName>
    </recommendedName>
    <alternativeName>
        <fullName>Inclusion body matrix protein</fullName>
    </alternativeName>
</protein>
<accession>P15628</accession>
<proteinExistence type="inferred from homology"/>
<dbReference type="EMBL" id="X15828">
    <property type="protein sequence ID" value="CAC16946.1"/>
    <property type="molecule type" value="Genomic_DNA"/>
</dbReference>
<dbReference type="PIR" id="JS0376">
    <property type="entry name" value="JS0376"/>
</dbReference>
<dbReference type="SMR" id="P15628"/>
<dbReference type="KEGG" id="vg:912257"/>
<dbReference type="OrthoDB" id="12709at10239"/>
<dbReference type="Proteomes" id="UP000001065">
    <property type="component" value="Genome"/>
</dbReference>
<dbReference type="GO" id="GO:0030430">
    <property type="term" value="C:host cell cytoplasm"/>
    <property type="evidence" value="ECO:0007669"/>
    <property type="project" value="UniProtKB-SubCell"/>
</dbReference>
<dbReference type="GO" id="GO:0006417">
    <property type="term" value="P:regulation of translation"/>
    <property type="evidence" value="ECO:0007669"/>
    <property type="project" value="UniProtKB-KW"/>
</dbReference>
<dbReference type="InterPro" id="IPR009027">
    <property type="entry name" value="Ribosomal_bL9/RNase_H1_N"/>
</dbReference>
<dbReference type="InterPro" id="IPR011320">
    <property type="entry name" value="RNase_H1_N"/>
</dbReference>
<dbReference type="Pfam" id="PF01693">
    <property type="entry name" value="Cauli_VI"/>
    <property type="match status" value="1"/>
</dbReference>
<dbReference type="SUPFAM" id="SSF55658">
    <property type="entry name" value="L9 N-domain-like"/>
    <property type="match status" value="1"/>
</dbReference>